<organism>
    <name type="scientific">Candida glabrata (strain ATCC 2001 / BCRC 20586 / JCM 3761 / NBRC 0622 / NRRL Y-65 / CBS 138)</name>
    <name type="common">Yeast</name>
    <name type="synonym">Nakaseomyces glabratus</name>
    <dbReference type="NCBI Taxonomy" id="284593"/>
    <lineage>
        <taxon>Eukaryota</taxon>
        <taxon>Fungi</taxon>
        <taxon>Dikarya</taxon>
        <taxon>Ascomycota</taxon>
        <taxon>Saccharomycotina</taxon>
        <taxon>Saccharomycetes</taxon>
        <taxon>Saccharomycetales</taxon>
        <taxon>Saccharomycetaceae</taxon>
        <taxon>Nakaseomyces</taxon>
    </lineage>
</organism>
<name>DCN1_CANGA</name>
<sequence>MVSRHEKELMKTFQSLTSCTDEGKAKRYLSANNWNINYALNEYYDKEVGGFTEDHMIRHQFKYPDELVSLFGHYAALIEEDGTQSITPDGLIDYIQDLGYNLEDLVTISLAHFLQCKNLENPITEKQFLYFWYNEGCYTLEQMRHYLEDCERKLCNDWKYFTTIYNYSFDLNASKQGVVETDIAIEYWKLFFEENRTKLSGIIKVDQAHLDLWCKFLQDEHKKLIHKDTWQMLLLFFKKFPSLDAIKTEYNEADAWPYTIDEFYEYLEERNVL</sequence>
<comment type="function">
    <text evidence="1">May contribute to neddylation of cullin components of SCF-type E3 ubiquitin ligase complexes. Neddylation of cullins play an essential role in the regulation of SCF-type complexes activity (By similarity).</text>
</comment>
<protein>
    <recommendedName>
        <fullName>Defective in cullin neddylation protein 1</fullName>
    </recommendedName>
</protein>
<feature type="chain" id="PRO_0000129511" description="Defective in cullin neddylation protein 1">
    <location>
        <begin position="1"/>
        <end position="273"/>
    </location>
</feature>
<feature type="domain" description="UBA-like">
    <location>
        <begin position="6"/>
        <end position="44"/>
    </location>
</feature>
<feature type="domain" description="DCUN1" evidence="2">
    <location>
        <begin position="62"/>
        <end position="268"/>
    </location>
</feature>
<keyword id="KW-1185">Reference proteome</keyword>
<keyword id="KW-0833">Ubl conjugation pathway</keyword>
<reference key="1">
    <citation type="journal article" date="2004" name="Nature">
        <title>Genome evolution in yeasts.</title>
        <authorList>
            <person name="Dujon B."/>
            <person name="Sherman D."/>
            <person name="Fischer G."/>
            <person name="Durrens P."/>
            <person name="Casaregola S."/>
            <person name="Lafontaine I."/>
            <person name="de Montigny J."/>
            <person name="Marck C."/>
            <person name="Neuveglise C."/>
            <person name="Talla E."/>
            <person name="Goffard N."/>
            <person name="Frangeul L."/>
            <person name="Aigle M."/>
            <person name="Anthouard V."/>
            <person name="Babour A."/>
            <person name="Barbe V."/>
            <person name="Barnay S."/>
            <person name="Blanchin S."/>
            <person name="Beckerich J.-M."/>
            <person name="Beyne E."/>
            <person name="Bleykasten C."/>
            <person name="Boisrame A."/>
            <person name="Boyer J."/>
            <person name="Cattolico L."/>
            <person name="Confanioleri F."/>
            <person name="de Daruvar A."/>
            <person name="Despons L."/>
            <person name="Fabre E."/>
            <person name="Fairhead C."/>
            <person name="Ferry-Dumazet H."/>
            <person name="Groppi A."/>
            <person name="Hantraye F."/>
            <person name="Hennequin C."/>
            <person name="Jauniaux N."/>
            <person name="Joyet P."/>
            <person name="Kachouri R."/>
            <person name="Kerrest A."/>
            <person name="Koszul R."/>
            <person name="Lemaire M."/>
            <person name="Lesur I."/>
            <person name="Ma L."/>
            <person name="Muller H."/>
            <person name="Nicaud J.-M."/>
            <person name="Nikolski M."/>
            <person name="Oztas S."/>
            <person name="Ozier-Kalogeropoulos O."/>
            <person name="Pellenz S."/>
            <person name="Potier S."/>
            <person name="Richard G.-F."/>
            <person name="Straub M.-L."/>
            <person name="Suleau A."/>
            <person name="Swennen D."/>
            <person name="Tekaia F."/>
            <person name="Wesolowski-Louvel M."/>
            <person name="Westhof E."/>
            <person name="Wirth B."/>
            <person name="Zeniou-Meyer M."/>
            <person name="Zivanovic Y."/>
            <person name="Bolotin-Fukuhara M."/>
            <person name="Thierry A."/>
            <person name="Bouchier C."/>
            <person name="Caudron B."/>
            <person name="Scarpelli C."/>
            <person name="Gaillardin C."/>
            <person name="Weissenbach J."/>
            <person name="Wincker P."/>
            <person name="Souciet J.-L."/>
        </authorList>
    </citation>
    <scope>NUCLEOTIDE SEQUENCE [LARGE SCALE GENOMIC DNA]</scope>
    <source>
        <strain>ATCC 2001 / BCRC 20586 / JCM 3761 / NBRC 0622 / NRRL Y-65 / CBS 138</strain>
    </source>
</reference>
<evidence type="ECO:0000250" key="1"/>
<evidence type="ECO:0000255" key="2">
    <source>
        <dbReference type="PROSITE-ProRule" id="PRU00574"/>
    </source>
</evidence>
<gene>
    <name type="primary">DCN1</name>
    <name type="ordered locus">CAGL0M04257g</name>
</gene>
<accession>Q6FJR2</accession>
<proteinExistence type="inferred from homology"/>
<dbReference type="EMBL" id="CR380959">
    <property type="protein sequence ID" value="CAG62508.1"/>
    <property type="molecule type" value="Genomic_DNA"/>
</dbReference>
<dbReference type="RefSeq" id="XP_449532.1">
    <property type="nucleotide sequence ID" value="XM_449532.1"/>
</dbReference>
<dbReference type="SMR" id="Q6FJR2"/>
<dbReference type="FunCoup" id="Q6FJR2">
    <property type="interactions" value="441"/>
</dbReference>
<dbReference type="STRING" id="284593.Q6FJR2"/>
<dbReference type="EnsemblFungi" id="CAGL0M04257g-T">
    <property type="protein sequence ID" value="CAGL0M04257g-T-p1"/>
    <property type="gene ID" value="CAGL0M04257g"/>
</dbReference>
<dbReference type="KEGG" id="cgr:2891541"/>
<dbReference type="CGD" id="CAL0137307">
    <property type="gene designation" value="CAGL0M04257g"/>
</dbReference>
<dbReference type="VEuPathDB" id="FungiDB:B1J91_M04257g"/>
<dbReference type="VEuPathDB" id="FungiDB:CAGL0M04257g"/>
<dbReference type="eggNOG" id="KOG3077">
    <property type="taxonomic scope" value="Eukaryota"/>
</dbReference>
<dbReference type="HOGENOM" id="CLU_047042_0_0_1"/>
<dbReference type="InParanoid" id="Q6FJR2"/>
<dbReference type="OMA" id="LWCKFLQ"/>
<dbReference type="Proteomes" id="UP000002428">
    <property type="component" value="Chromosome M"/>
</dbReference>
<dbReference type="GO" id="GO:0000151">
    <property type="term" value="C:ubiquitin ligase complex"/>
    <property type="evidence" value="ECO:0007669"/>
    <property type="project" value="TreeGrafter"/>
</dbReference>
<dbReference type="GO" id="GO:0097602">
    <property type="term" value="F:cullin family protein binding"/>
    <property type="evidence" value="ECO:0007669"/>
    <property type="project" value="EnsemblFungi"/>
</dbReference>
<dbReference type="GO" id="GO:0030674">
    <property type="term" value="F:protein-macromolecule adaptor activity"/>
    <property type="evidence" value="ECO:0007669"/>
    <property type="project" value="EnsemblFungi"/>
</dbReference>
<dbReference type="GO" id="GO:0031624">
    <property type="term" value="F:ubiquitin conjugating enzyme binding"/>
    <property type="evidence" value="ECO:0007669"/>
    <property type="project" value="EnsemblFungi"/>
</dbReference>
<dbReference type="GO" id="GO:0032182">
    <property type="term" value="F:ubiquitin-like protein binding"/>
    <property type="evidence" value="ECO:0007669"/>
    <property type="project" value="EnsemblFungi"/>
</dbReference>
<dbReference type="GO" id="GO:0045116">
    <property type="term" value="P:protein neddylation"/>
    <property type="evidence" value="ECO:0007669"/>
    <property type="project" value="EnsemblFungi"/>
</dbReference>
<dbReference type="CDD" id="cd14352">
    <property type="entry name" value="UBA_DCN1"/>
    <property type="match status" value="1"/>
</dbReference>
<dbReference type="Gene3D" id="1.10.238.200">
    <property type="entry name" value="Cullin, PONY binding domain"/>
    <property type="match status" value="1"/>
</dbReference>
<dbReference type="Gene3D" id="1.10.8.10">
    <property type="entry name" value="DNA helicase RuvA subunit, C-terminal domain"/>
    <property type="match status" value="1"/>
</dbReference>
<dbReference type="Gene3D" id="1.10.238.10">
    <property type="entry name" value="EF-hand"/>
    <property type="match status" value="1"/>
</dbReference>
<dbReference type="InterPro" id="IPR014764">
    <property type="entry name" value="DCN-prot"/>
</dbReference>
<dbReference type="InterPro" id="IPR042460">
    <property type="entry name" value="DCN1-like_PONY"/>
</dbReference>
<dbReference type="InterPro" id="IPR005176">
    <property type="entry name" value="PONY_dom"/>
</dbReference>
<dbReference type="InterPro" id="IPR009060">
    <property type="entry name" value="UBA-like_sf"/>
</dbReference>
<dbReference type="PANTHER" id="PTHR12281:SF31">
    <property type="entry name" value="DCN1-LIKE PROTEIN 3"/>
    <property type="match status" value="1"/>
</dbReference>
<dbReference type="PANTHER" id="PTHR12281">
    <property type="entry name" value="RP42 RELATED"/>
    <property type="match status" value="1"/>
</dbReference>
<dbReference type="Pfam" id="PF03556">
    <property type="entry name" value="Cullin_binding"/>
    <property type="match status" value="1"/>
</dbReference>
<dbReference type="Pfam" id="PF14555">
    <property type="entry name" value="UBA_4"/>
    <property type="match status" value="1"/>
</dbReference>
<dbReference type="SUPFAM" id="SSF46934">
    <property type="entry name" value="UBA-like"/>
    <property type="match status" value="1"/>
</dbReference>
<dbReference type="PROSITE" id="PS51229">
    <property type="entry name" value="DCUN1"/>
    <property type="match status" value="1"/>
</dbReference>